<evidence type="ECO:0000250" key="1"/>
<evidence type="ECO:0000255" key="2">
    <source>
        <dbReference type="HAMAP-Rule" id="MF_00614"/>
    </source>
</evidence>
<protein>
    <recommendedName>
        <fullName evidence="2">Flap endonuclease 1</fullName>
        <shortName evidence="2">FEN-1</shortName>
        <ecNumber evidence="2">3.1.-.-</ecNumber>
    </recommendedName>
    <alternativeName>
        <fullName evidence="2">Flap structure-specific endonuclease 1</fullName>
    </alternativeName>
</protein>
<comment type="function">
    <text evidence="1">Structure-specific nuclease with 5'-flap endonuclease and 5'-3' exonuclease activities involved in DNA replication and repair. During DNA replication, cleaves the 5'-overhanging flap structure that is generated by displacement synthesis when DNA polymerase encounters the 5'-end of a downstream Okazaki fragment. Binds the unpaired 3'-DNA end and kinks the DNA to facilitate 5' cleavage specificity. Cleaves one nucleotide into the double-stranded DNA from the junction in flap DNA, leaving a nick for ligation. Also involved in the base excision repair (BER) pathway. Acts as a genome stabilization factor that prevents flaps from equilibrating into structures that lead to duplications and deletions. Also possesses 5'-3' exonuclease activity on nicked or gapped double-stranded DNA (By similarity).</text>
</comment>
<comment type="cofactor">
    <cofactor evidence="2">
        <name>Mg(2+)</name>
        <dbReference type="ChEBI" id="CHEBI:18420"/>
    </cofactor>
    <text evidence="2">Binds 2 magnesium ions per subunit. They probably participate in the reaction catalyzed by the enzyme. May bind an additional third magnesium ion after substrate binding.</text>
</comment>
<comment type="subunit">
    <text evidence="2">Interacts with PCNA. PCNA stimulates the nuclease activity without altering cleavage specificity.</text>
</comment>
<comment type="similarity">
    <text evidence="2">Belongs to the XPG/RAD2 endonuclease family. FEN1 subfamily.</text>
</comment>
<dbReference type="EC" id="3.1.-.-" evidence="2"/>
<dbReference type="EMBL" id="CP000575">
    <property type="protein sequence ID" value="ABN69822.1"/>
    <property type="molecule type" value="Genomic_DNA"/>
</dbReference>
<dbReference type="RefSeq" id="WP_011839013.1">
    <property type="nucleotide sequence ID" value="NC_009033.1"/>
</dbReference>
<dbReference type="SMR" id="A3DMG2"/>
<dbReference type="STRING" id="399550.Smar_0719"/>
<dbReference type="GeneID" id="4908071"/>
<dbReference type="KEGG" id="smr:Smar_0719"/>
<dbReference type="eggNOG" id="arCOG04050">
    <property type="taxonomic scope" value="Archaea"/>
</dbReference>
<dbReference type="HOGENOM" id="CLU_032444_0_0_2"/>
<dbReference type="OrthoDB" id="9593at2157"/>
<dbReference type="Proteomes" id="UP000000254">
    <property type="component" value="Chromosome"/>
</dbReference>
<dbReference type="GO" id="GO:0008409">
    <property type="term" value="F:5'-3' exonuclease activity"/>
    <property type="evidence" value="ECO:0007669"/>
    <property type="project" value="UniProtKB-UniRule"/>
</dbReference>
<dbReference type="GO" id="GO:0017108">
    <property type="term" value="F:5'-flap endonuclease activity"/>
    <property type="evidence" value="ECO:0007669"/>
    <property type="project" value="UniProtKB-UniRule"/>
</dbReference>
<dbReference type="GO" id="GO:0003677">
    <property type="term" value="F:DNA binding"/>
    <property type="evidence" value="ECO:0007669"/>
    <property type="project" value="UniProtKB-UniRule"/>
</dbReference>
<dbReference type="GO" id="GO:0000287">
    <property type="term" value="F:magnesium ion binding"/>
    <property type="evidence" value="ECO:0007669"/>
    <property type="project" value="UniProtKB-UniRule"/>
</dbReference>
<dbReference type="GO" id="GO:0006281">
    <property type="term" value="P:DNA repair"/>
    <property type="evidence" value="ECO:0007669"/>
    <property type="project" value="UniProtKB-UniRule"/>
</dbReference>
<dbReference type="GO" id="GO:0043137">
    <property type="term" value="P:DNA replication, removal of RNA primer"/>
    <property type="evidence" value="ECO:0007669"/>
    <property type="project" value="UniProtKB-UniRule"/>
</dbReference>
<dbReference type="CDD" id="cd09867">
    <property type="entry name" value="PIN_FEN1"/>
    <property type="match status" value="1"/>
</dbReference>
<dbReference type="FunFam" id="1.10.150.20:FF:000087">
    <property type="entry name" value="Flap endonuclease 1"/>
    <property type="match status" value="1"/>
</dbReference>
<dbReference type="FunFam" id="3.40.50.1010:FF:000016">
    <property type="entry name" value="Flap endonuclease 1"/>
    <property type="match status" value="1"/>
</dbReference>
<dbReference type="Gene3D" id="1.10.150.20">
    <property type="entry name" value="5' to 3' exonuclease, C-terminal subdomain"/>
    <property type="match status" value="1"/>
</dbReference>
<dbReference type="Gene3D" id="3.40.50.1010">
    <property type="entry name" value="5'-nuclease"/>
    <property type="match status" value="1"/>
</dbReference>
<dbReference type="HAMAP" id="MF_00614">
    <property type="entry name" value="Fen"/>
    <property type="match status" value="1"/>
</dbReference>
<dbReference type="InterPro" id="IPR002421">
    <property type="entry name" value="5-3_exonuclease"/>
</dbReference>
<dbReference type="InterPro" id="IPR036279">
    <property type="entry name" value="5-3_exonuclease_C_sf"/>
</dbReference>
<dbReference type="InterPro" id="IPR023426">
    <property type="entry name" value="Flap_endonuc"/>
</dbReference>
<dbReference type="InterPro" id="IPR019973">
    <property type="entry name" value="Flap_endonuc_arc"/>
</dbReference>
<dbReference type="InterPro" id="IPR008918">
    <property type="entry name" value="HhH2"/>
</dbReference>
<dbReference type="InterPro" id="IPR029060">
    <property type="entry name" value="PIN-like_dom_sf"/>
</dbReference>
<dbReference type="InterPro" id="IPR006086">
    <property type="entry name" value="XPG-I_dom"/>
</dbReference>
<dbReference type="InterPro" id="IPR006084">
    <property type="entry name" value="XPG/Rad2"/>
</dbReference>
<dbReference type="InterPro" id="IPR006085">
    <property type="entry name" value="XPG_DNA_repair_N"/>
</dbReference>
<dbReference type="NCBIfam" id="TIGR03674">
    <property type="entry name" value="fen_arch"/>
    <property type="match status" value="1"/>
</dbReference>
<dbReference type="PANTHER" id="PTHR11081:SF9">
    <property type="entry name" value="FLAP ENDONUCLEASE 1"/>
    <property type="match status" value="1"/>
</dbReference>
<dbReference type="PANTHER" id="PTHR11081">
    <property type="entry name" value="FLAP ENDONUCLEASE FAMILY MEMBER"/>
    <property type="match status" value="1"/>
</dbReference>
<dbReference type="Pfam" id="PF00867">
    <property type="entry name" value="XPG_I"/>
    <property type="match status" value="1"/>
</dbReference>
<dbReference type="Pfam" id="PF00752">
    <property type="entry name" value="XPG_N"/>
    <property type="match status" value="1"/>
</dbReference>
<dbReference type="PRINTS" id="PR00853">
    <property type="entry name" value="XPGRADSUPER"/>
</dbReference>
<dbReference type="SMART" id="SM00475">
    <property type="entry name" value="53EXOc"/>
    <property type="match status" value="1"/>
</dbReference>
<dbReference type="SMART" id="SM00279">
    <property type="entry name" value="HhH2"/>
    <property type="match status" value="1"/>
</dbReference>
<dbReference type="SMART" id="SM00484">
    <property type="entry name" value="XPGI"/>
    <property type="match status" value="1"/>
</dbReference>
<dbReference type="SMART" id="SM00485">
    <property type="entry name" value="XPGN"/>
    <property type="match status" value="1"/>
</dbReference>
<dbReference type="SUPFAM" id="SSF47807">
    <property type="entry name" value="5' to 3' exonuclease, C-terminal subdomain"/>
    <property type="match status" value="1"/>
</dbReference>
<dbReference type="SUPFAM" id="SSF88723">
    <property type="entry name" value="PIN domain-like"/>
    <property type="match status" value="1"/>
</dbReference>
<accession>A3DMG2</accession>
<feature type="chain" id="PRO_1000061333" description="Flap endonuclease 1">
    <location>
        <begin position="1"/>
        <end position="350"/>
    </location>
</feature>
<feature type="region of interest" description="N-domain">
    <location>
        <begin position="1"/>
        <end position="102"/>
    </location>
</feature>
<feature type="region of interest" description="I-domain">
    <location>
        <begin position="120"/>
        <end position="262"/>
    </location>
</feature>
<feature type="region of interest" description="Interaction with PCNA" evidence="2">
    <location>
        <begin position="341"/>
        <end position="349"/>
    </location>
</feature>
<feature type="binding site" evidence="2">
    <location>
        <position position="31"/>
    </location>
    <ligand>
        <name>Mg(2+)</name>
        <dbReference type="ChEBI" id="CHEBI:18420"/>
        <label>1</label>
    </ligand>
</feature>
<feature type="binding site" evidence="2">
    <location>
        <position position="84"/>
    </location>
    <ligand>
        <name>Mg(2+)</name>
        <dbReference type="ChEBI" id="CHEBI:18420"/>
        <label>1</label>
    </ligand>
</feature>
<feature type="binding site" evidence="2">
    <location>
        <position position="156"/>
    </location>
    <ligand>
        <name>Mg(2+)</name>
        <dbReference type="ChEBI" id="CHEBI:18420"/>
        <label>1</label>
    </ligand>
</feature>
<feature type="binding site" evidence="2">
    <location>
        <position position="158"/>
    </location>
    <ligand>
        <name>Mg(2+)</name>
        <dbReference type="ChEBI" id="CHEBI:18420"/>
        <label>1</label>
    </ligand>
</feature>
<feature type="binding site" evidence="2">
    <location>
        <position position="177"/>
    </location>
    <ligand>
        <name>Mg(2+)</name>
        <dbReference type="ChEBI" id="CHEBI:18420"/>
        <label>2</label>
    </ligand>
</feature>
<feature type="binding site" evidence="2">
    <location>
        <position position="179"/>
    </location>
    <ligand>
        <name>Mg(2+)</name>
        <dbReference type="ChEBI" id="CHEBI:18420"/>
        <label>2</label>
    </ligand>
</feature>
<feature type="binding site" evidence="2">
    <location>
        <position position="240"/>
    </location>
    <ligand>
        <name>Mg(2+)</name>
        <dbReference type="ChEBI" id="CHEBI:18420"/>
        <label>2</label>
    </ligand>
</feature>
<proteinExistence type="inferred from homology"/>
<sequence length="350" mass="39956">MGVNLKDLIPEEAKMTIEDLRMLRGKIVVIDGYNALYQFLTAIRQPDGTPLMDSQGRITSHLSGLFYRTINILENGIKPAYVFDGKPPEIKAKEIEKRRKIREDASKKYEEALRKGDIEAARRYAMMSAKLTDEMVQDAKKLLDAMGIPWIQAPAEGEAQAAYIVSKGDAWASASQDYDSLLFGSPRLIRNLTISGKRKLPRKNVYIEIKPEIIELKKLLEKLGLTREQLIYVAILIGTDYNPDGVKGIGPKKALQLVKAYKTLDKILKIIPKTEFPIEPEKIVEYFLNPPVSTDYKLEWRAPDESKIREILVEEHDFNPERVKNAVERLVKAYREHIKSKQLGLEAWFS</sequence>
<reference key="1">
    <citation type="journal article" date="2009" name="BMC Genomics">
        <title>The complete genome sequence of Staphylothermus marinus reveals differences in sulfur metabolism among heterotrophic Crenarchaeota.</title>
        <authorList>
            <person name="Anderson I.J."/>
            <person name="Dharmarajan L."/>
            <person name="Rodriguez J."/>
            <person name="Hooper S."/>
            <person name="Porat I."/>
            <person name="Ulrich L.E."/>
            <person name="Elkins J.G."/>
            <person name="Mavromatis K."/>
            <person name="Sun H."/>
            <person name="Land M."/>
            <person name="Lapidus A."/>
            <person name="Lucas S."/>
            <person name="Barry K."/>
            <person name="Huber H."/>
            <person name="Zhulin I.B."/>
            <person name="Whitman W.B."/>
            <person name="Mukhopadhyay B."/>
            <person name="Woese C."/>
            <person name="Bristow J."/>
            <person name="Kyrpides N."/>
        </authorList>
    </citation>
    <scope>NUCLEOTIDE SEQUENCE [LARGE SCALE GENOMIC DNA]</scope>
    <source>
        <strain>ATCC 43588 / DSM 3639 / JCM 9404 / F1</strain>
    </source>
</reference>
<reference key="2">
    <citation type="journal article" date="2009" name="Stand. Genomic Sci.">
        <title>Complete genome sequence of Staphylothermus marinus Stetter and Fiala 1986 type strain F1.</title>
        <authorList>
            <person name="Anderson I.J."/>
            <person name="Sun H."/>
            <person name="Lapidus A."/>
            <person name="Copeland A."/>
            <person name="Glavina Del Rio T."/>
            <person name="Tice H."/>
            <person name="Dalin E."/>
            <person name="Lucas S."/>
            <person name="Barry K."/>
            <person name="Land M."/>
            <person name="Richardson P."/>
            <person name="Huber H."/>
            <person name="Kyrpides N.C."/>
        </authorList>
    </citation>
    <scope>NUCLEOTIDE SEQUENCE [LARGE SCALE GENOMIC DNA]</scope>
    <source>
        <strain>ATCC 43588 / DSM 3639 / JCM 9404 / F1</strain>
    </source>
</reference>
<gene>
    <name evidence="2" type="primary">fen</name>
    <name type="ordered locus">Smar_0719</name>
</gene>
<name>FEN_STAMF</name>
<keyword id="KW-0227">DNA damage</keyword>
<keyword id="KW-0234">DNA repair</keyword>
<keyword id="KW-0235">DNA replication</keyword>
<keyword id="KW-0255">Endonuclease</keyword>
<keyword id="KW-0269">Exonuclease</keyword>
<keyword id="KW-0378">Hydrolase</keyword>
<keyword id="KW-0460">Magnesium</keyword>
<keyword id="KW-0479">Metal-binding</keyword>
<keyword id="KW-0540">Nuclease</keyword>
<keyword id="KW-1185">Reference proteome</keyword>
<organism>
    <name type="scientific">Staphylothermus marinus (strain ATCC 43588 / DSM 3639 / JCM 9404 / F1)</name>
    <dbReference type="NCBI Taxonomy" id="399550"/>
    <lineage>
        <taxon>Archaea</taxon>
        <taxon>Thermoproteota</taxon>
        <taxon>Thermoprotei</taxon>
        <taxon>Desulfurococcales</taxon>
        <taxon>Desulfurococcaceae</taxon>
        <taxon>Staphylothermus</taxon>
    </lineage>
</organism>